<organism>
    <name type="scientific">Pongo abelii</name>
    <name type="common">Sumatran orangutan</name>
    <name type="synonym">Pongo pygmaeus abelii</name>
    <dbReference type="NCBI Taxonomy" id="9601"/>
    <lineage>
        <taxon>Eukaryota</taxon>
        <taxon>Metazoa</taxon>
        <taxon>Chordata</taxon>
        <taxon>Craniata</taxon>
        <taxon>Vertebrata</taxon>
        <taxon>Euteleostomi</taxon>
        <taxon>Mammalia</taxon>
        <taxon>Eutheria</taxon>
        <taxon>Euarchontoglires</taxon>
        <taxon>Primates</taxon>
        <taxon>Haplorrhini</taxon>
        <taxon>Catarrhini</taxon>
        <taxon>Hominidae</taxon>
        <taxon>Pongo</taxon>
    </lineage>
</organism>
<gene>
    <name type="primary">LYRM7</name>
    <name type="synonym">MZM1L</name>
</gene>
<proteinExistence type="inferred from homology"/>
<evidence type="ECO:0000250" key="1"/>
<evidence type="ECO:0000250" key="2">
    <source>
        <dbReference type="UniProtKB" id="Q5U5X0"/>
    </source>
</evidence>
<evidence type="ECO:0000305" key="3"/>
<reference key="1">
    <citation type="submission" date="2004-11" db="EMBL/GenBank/DDBJ databases">
        <authorList>
            <consortium name="The German cDNA consortium"/>
        </authorList>
    </citation>
    <scope>NUCLEOTIDE SEQUENCE [LARGE SCALE MRNA]</scope>
    <source>
        <tissue>Brain cortex</tissue>
    </source>
</reference>
<keyword id="KW-0143">Chaperone</keyword>
<keyword id="KW-0496">Mitochondrion</keyword>
<keyword id="KW-0597">Phosphoprotein</keyword>
<keyword id="KW-1185">Reference proteome</keyword>
<dbReference type="EMBL" id="CR857609">
    <property type="protein sequence ID" value="CAH89884.1"/>
    <property type="molecule type" value="mRNA"/>
</dbReference>
<dbReference type="RefSeq" id="NP_001124878.1">
    <property type="nucleotide sequence ID" value="NM_001131406.1"/>
</dbReference>
<dbReference type="SMR" id="Q5REC3"/>
<dbReference type="FunCoup" id="Q5REC3">
    <property type="interactions" value="638"/>
</dbReference>
<dbReference type="STRING" id="9601.ENSPPYP00000017610"/>
<dbReference type="Ensembl" id="ENSPPYT00000046530.1">
    <property type="protein sequence ID" value="ENSPPYP00000044597.1"/>
    <property type="gene ID" value="ENSPPYG00000030710.1"/>
</dbReference>
<dbReference type="GeneID" id="100171743"/>
<dbReference type="KEGG" id="pon:100171743"/>
<dbReference type="CTD" id="90624"/>
<dbReference type="eggNOG" id="ENOG502S5FU">
    <property type="taxonomic scope" value="Eukaryota"/>
</dbReference>
<dbReference type="GeneTree" id="ENSGT00390000017923"/>
<dbReference type="InParanoid" id="Q5REC3"/>
<dbReference type="OMA" id="TRQYVFH"/>
<dbReference type="OrthoDB" id="529194at2759"/>
<dbReference type="Proteomes" id="UP000001595">
    <property type="component" value="Chromosome 5"/>
</dbReference>
<dbReference type="GO" id="GO:0005759">
    <property type="term" value="C:mitochondrial matrix"/>
    <property type="evidence" value="ECO:0007669"/>
    <property type="project" value="UniProtKB-SubCell"/>
</dbReference>
<dbReference type="GO" id="GO:0031966">
    <property type="term" value="C:mitochondrial membrane"/>
    <property type="evidence" value="ECO:0007669"/>
    <property type="project" value="Ensembl"/>
</dbReference>
<dbReference type="GO" id="GO:0044183">
    <property type="term" value="F:protein folding chaperone"/>
    <property type="evidence" value="ECO:0007669"/>
    <property type="project" value="TreeGrafter"/>
</dbReference>
<dbReference type="GO" id="GO:0045333">
    <property type="term" value="P:cellular respiration"/>
    <property type="evidence" value="ECO:0007669"/>
    <property type="project" value="Ensembl"/>
</dbReference>
<dbReference type="GO" id="GO:0034551">
    <property type="term" value="P:mitochondrial respiratory chain complex III assembly"/>
    <property type="evidence" value="ECO:0007669"/>
    <property type="project" value="Ensembl"/>
</dbReference>
<dbReference type="CDD" id="cd20267">
    <property type="entry name" value="Complex1_LYR_LYRM7"/>
    <property type="match status" value="1"/>
</dbReference>
<dbReference type="InterPro" id="IPR008011">
    <property type="entry name" value="Complex1_LYR_dom"/>
</dbReference>
<dbReference type="InterPro" id="IPR045298">
    <property type="entry name" value="Complex1_LYR_LYRM7"/>
</dbReference>
<dbReference type="InterPro" id="IPR050435">
    <property type="entry name" value="MZM1/LYRM7"/>
</dbReference>
<dbReference type="PANTHER" id="PTHR46749">
    <property type="entry name" value="COMPLEX III ASSEMBLY FACTOR LYRM7"/>
    <property type="match status" value="1"/>
</dbReference>
<dbReference type="PANTHER" id="PTHR46749:SF1">
    <property type="entry name" value="COMPLEX III ASSEMBLY FACTOR LYRM7"/>
    <property type="match status" value="1"/>
</dbReference>
<dbReference type="Pfam" id="PF05347">
    <property type="entry name" value="Complex1_LYR"/>
    <property type="match status" value="1"/>
</dbReference>
<accession>Q5REC3</accession>
<name>LYRM7_PONAB</name>
<comment type="function">
    <text evidence="1">Assembly factor required for Rieske Fe-S protein UQCRFS1 incorporation into the cytochrome b-c1 (CIII) complex. Functions as a chaperone, binding to this subunit within the mitochondrial matrix and stabilizing it prior to its translocation and insertion into the late CIII dimeric intermediate within the mitochondrial inner membrane (By similarity).</text>
</comment>
<comment type="subunit">
    <text evidence="1">Interacts with UQCRFS1.</text>
</comment>
<comment type="subcellular location">
    <subcellularLocation>
        <location evidence="1">Mitochondrion matrix</location>
    </subcellularLocation>
</comment>
<comment type="similarity">
    <text evidence="3">Belongs to the complex I LYR family.</text>
</comment>
<protein>
    <recommendedName>
        <fullName>Complex III assembly factor LYRM7</fullName>
    </recommendedName>
    <alternativeName>
        <fullName>LYR motif-containing protein 7</fullName>
    </alternativeName>
</protein>
<feature type="chain" id="PRO_0000251181" description="Complex III assembly factor LYRM7">
    <location>
        <begin position="1"/>
        <end position="104"/>
    </location>
</feature>
<feature type="modified residue" description="Phosphoserine" evidence="2">
    <location>
        <position position="60"/>
    </location>
</feature>
<sequence length="104" mass="11951">MGQAVKVLQLFKTLHRTRQQVFKNDARALEAARIKINEEFKKNKSETSPKKIEELMKIGSDVELLLRTSVIQGIHTDHNTLKLVPRKDLLVENVPYCDAPTQKQ</sequence>